<accession>O04066</accession>
<name>ACBP_RICCO</name>
<reference key="1">
    <citation type="online journal article" date="1997" name="Plant Gene Register">
        <title>A cDNA clone for acyl-CoA-binding protein from Castor bean.</title>
        <authorList>
            <person name="Erber A."/>
            <person name="Horstmann C."/>
            <person name="Schobert C."/>
        </authorList>
        <locator>PGR97-075</locator>
    </citation>
    <scope>NUCLEOTIDE SEQUENCE [MRNA]</scope>
    <source>
        <strain>cv. Sanguineus</strain>
    </source>
</reference>
<evidence type="ECO:0000250" key="1"/>
<evidence type="ECO:0000255" key="2">
    <source>
        <dbReference type="PROSITE-ProRule" id="PRU00573"/>
    </source>
</evidence>
<evidence type="ECO:0000256" key="3">
    <source>
        <dbReference type="SAM" id="MobiDB-lite"/>
    </source>
</evidence>
<evidence type="ECO:0000305" key="4"/>
<sequence length="90" mass="10051">MGLKEDFEEHAEKAKTLPENTTNENKLILYGLYKQATVGPVNTSRPGMFNMRDRAKWDAWKAVEGKSTEEAMSDYITKVKQLLGEAAASA</sequence>
<organism>
    <name type="scientific">Ricinus communis</name>
    <name type="common">Castor bean</name>
    <dbReference type="NCBI Taxonomy" id="3988"/>
    <lineage>
        <taxon>Eukaryota</taxon>
        <taxon>Viridiplantae</taxon>
        <taxon>Streptophyta</taxon>
        <taxon>Embryophyta</taxon>
        <taxon>Tracheophyta</taxon>
        <taxon>Spermatophyta</taxon>
        <taxon>Magnoliopsida</taxon>
        <taxon>eudicotyledons</taxon>
        <taxon>Gunneridae</taxon>
        <taxon>Pentapetalae</taxon>
        <taxon>rosids</taxon>
        <taxon>fabids</taxon>
        <taxon>Malpighiales</taxon>
        <taxon>Euphorbiaceae</taxon>
        <taxon>Acalyphoideae</taxon>
        <taxon>Acalypheae</taxon>
        <taxon>Ricinus</taxon>
    </lineage>
</organism>
<keyword id="KW-0446">Lipid-binding</keyword>
<keyword id="KW-0813">Transport</keyword>
<dbReference type="EMBL" id="Y08996">
    <property type="protein sequence ID" value="CAA70200.1"/>
    <property type="molecule type" value="mRNA"/>
</dbReference>
<dbReference type="PIR" id="T09844">
    <property type="entry name" value="T09844"/>
</dbReference>
<dbReference type="SMR" id="O04066"/>
<dbReference type="eggNOG" id="KOG0817">
    <property type="taxonomic scope" value="Eukaryota"/>
</dbReference>
<dbReference type="GO" id="GO:0000062">
    <property type="term" value="F:fatty-acyl-CoA binding"/>
    <property type="evidence" value="ECO:0007669"/>
    <property type="project" value="InterPro"/>
</dbReference>
<dbReference type="CDD" id="cd00435">
    <property type="entry name" value="ACBP"/>
    <property type="match status" value="1"/>
</dbReference>
<dbReference type="FunFam" id="1.20.80.10:FF:000010">
    <property type="entry name" value="Acyl-CoA-binding domain-containing protein 5"/>
    <property type="match status" value="1"/>
</dbReference>
<dbReference type="Gene3D" id="1.20.80.10">
    <property type="match status" value="1"/>
</dbReference>
<dbReference type="InterPro" id="IPR022408">
    <property type="entry name" value="Acyl-CoA-binding_prot_CS"/>
</dbReference>
<dbReference type="InterPro" id="IPR000582">
    <property type="entry name" value="Acyl-CoA-binding_protein"/>
</dbReference>
<dbReference type="InterPro" id="IPR035984">
    <property type="entry name" value="Acyl-CoA-binding_sf"/>
</dbReference>
<dbReference type="InterPro" id="IPR014352">
    <property type="entry name" value="FERM/acyl-CoA-bd_prot_sf"/>
</dbReference>
<dbReference type="PANTHER" id="PTHR23310:SF62">
    <property type="entry name" value="ACYL-COA BINDING PROTEIN 1, ISOFORM A"/>
    <property type="match status" value="1"/>
</dbReference>
<dbReference type="PANTHER" id="PTHR23310">
    <property type="entry name" value="ACYL-COA-BINDING PROTEIN, ACBP"/>
    <property type="match status" value="1"/>
</dbReference>
<dbReference type="Pfam" id="PF00887">
    <property type="entry name" value="ACBP"/>
    <property type="match status" value="1"/>
</dbReference>
<dbReference type="PRINTS" id="PR00689">
    <property type="entry name" value="ACOABINDINGP"/>
</dbReference>
<dbReference type="SUPFAM" id="SSF47027">
    <property type="entry name" value="Acyl-CoA binding protein"/>
    <property type="match status" value="1"/>
</dbReference>
<dbReference type="PROSITE" id="PS00880">
    <property type="entry name" value="ACB_1"/>
    <property type="match status" value="1"/>
</dbReference>
<dbReference type="PROSITE" id="PS51228">
    <property type="entry name" value="ACB_2"/>
    <property type="match status" value="1"/>
</dbReference>
<comment type="function">
    <text evidence="1">Binds medium- and long-chain acyl-CoA esters with very high affinity and may function as an intracellular carrier of acyl-CoA esters.</text>
</comment>
<comment type="similarity">
    <text evidence="4">Belongs to the ACBP family.</text>
</comment>
<feature type="chain" id="PRO_0000214022" description="Acyl-CoA-binding protein">
    <location>
        <begin position="1"/>
        <end position="90"/>
    </location>
</feature>
<feature type="domain" description="ACB" evidence="2">
    <location>
        <begin position="3"/>
        <end position="88"/>
    </location>
</feature>
<feature type="region of interest" description="Disordered" evidence="3">
    <location>
        <begin position="1"/>
        <end position="20"/>
    </location>
</feature>
<feature type="compositionally biased region" description="Basic and acidic residues" evidence="3">
    <location>
        <begin position="1"/>
        <end position="16"/>
    </location>
</feature>
<feature type="binding site" evidence="1">
    <location>
        <begin position="30"/>
        <end position="34"/>
    </location>
    <ligand>
        <name>an acyl-CoA</name>
        <dbReference type="ChEBI" id="CHEBI:58342"/>
    </ligand>
</feature>
<feature type="binding site" evidence="1">
    <location>
        <position position="56"/>
    </location>
    <ligand>
        <name>an acyl-CoA</name>
        <dbReference type="ChEBI" id="CHEBI:58342"/>
    </ligand>
</feature>
<feature type="binding site" evidence="1">
    <location>
        <position position="75"/>
    </location>
    <ligand>
        <name>an acyl-CoA</name>
        <dbReference type="ChEBI" id="CHEBI:58342"/>
    </ligand>
</feature>
<proteinExistence type="inferred from homology"/>
<protein>
    <recommendedName>
        <fullName>Acyl-CoA-binding protein</fullName>
        <shortName>ACBP</shortName>
    </recommendedName>
</protein>